<organism>
    <name type="scientific">Bifidobacterium longum (strain NCC 2705)</name>
    <dbReference type="NCBI Taxonomy" id="206672"/>
    <lineage>
        <taxon>Bacteria</taxon>
        <taxon>Bacillati</taxon>
        <taxon>Actinomycetota</taxon>
        <taxon>Actinomycetes</taxon>
        <taxon>Bifidobacteriales</taxon>
        <taxon>Bifidobacteriaceae</taxon>
        <taxon>Bifidobacterium</taxon>
    </lineage>
</organism>
<sequence length="490" mass="53392">MTENNEHLALWGGRFTSGPSPELARLSKSTQFDWRLADDDIAGSRAHARALGRAGLLTADELQRMEDALDTLQRHVDDGSFAPIEDDEDEATALERGLIDIAGDELGGKLRAGRSRNDQIACLIRMWLRRHSRVIAGLLLDLVNALIEQSEKAGRTVMPGRTHMQHAQPVLLAHQLMAHAWPLIRDVQRLIDWDKRINASPYGSGALAGNTLGLDPEAVARELGFSRVTDNSIDGTAARDLVAEFAFVAAMTGVDISRLSEEIIIWNTQEFAFVKLDDGYSTGSSIMPQKKNPDIAELARGKSGRLIGDLTGLLATLKGLPTAYARDLQEDKEAVFDQVDTLEVLLPAFTGMVRTMHFDGDRLEEEAPTGFALATDIAEWLVKNGVPFRHAHELSGACVKLAEGRGQELWDLTDNDFIETFAAFLPADKAPGVREVLSSHGSVDSRNGKGGTAYGRVREQIADAKAEVEELKLFPASTSDGSAYKAPGTF</sequence>
<feature type="chain" id="PRO_0000137741" description="Argininosuccinate lyase">
    <location>
        <begin position="1"/>
        <end position="490"/>
    </location>
</feature>
<evidence type="ECO:0000255" key="1">
    <source>
        <dbReference type="HAMAP-Rule" id="MF_00006"/>
    </source>
</evidence>
<dbReference type="EC" id="4.3.2.1" evidence="1"/>
<dbReference type="EMBL" id="AE014295">
    <property type="protein sequence ID" value="AAN24865.1"/>
    <property type="molecule type" value="Genomic_DNA"/>
</dbReference>
<dbReference type="RefSeq" id="NP_696229.1">
    <property type="nucleotide sequence ID" value="NC_004307.2"/>
</dbReference>
<dbReference type="RefSeq" id="WP_007051162.1">
    <property type="nucleotide sequence ID" value="NC_004307.2"/>
</dbReference>
<dbReference type="SMR" id="Q8G5F3"/>
<dbReference type="STRING" id="206672.BL1057"/>
<dbReference type="EnsemblBacteria" id="AAN24865">
    <property type="protein sequence ID" value="AAN24865"/>
    <property type="gene ID" value="BL1057"/>
</dbReference>
<dbReference type="GeneID" id="69577802"/>
<dbReference type="KEGG" id="blo:BL1057"/>
<dbReference type="PATRIC" id="fig|206672.9.peg.763"/>
<dbReference type="HOGENOM" id="CLU_027272_2_2_11"/>
<dbReference type="OrthoDB" id="9769623at2"/>
<dbReference type="PhylomeDB" id="Q8G5F3"/>
<dbReference type="UniPathway" id="UPA00068">
    <property type="reaction ID" value="UER00114"/>
</dbReference>
<dbReference type="Proteomes" id="UP000000439">
    <property type="component" value="Chromosome"/>
</dbReference>
<dbReference type="GO" id="GO:0005829">
    <property type="term" value="C:cytosol"/>
    <property type="evidence" value="ECO:0007669"/>
    <property type="project" value="TreeGrafter"/>
</dbReference>
<dbReference type="GO" id="GO:0004056">
    <property type="term" value="F:argininosuccinate lyase activity"/>
    <property type="evidence" value="ECO:0007669"/>
    <property type="project" value="UniProtKB-UniRule"/>
</dbReference>
<dbReference type="GO" id="GO:0042450">
    <property type="term" value="P:arginine biosynthetic process via ornithine"/>
    <property type="evidence" value="ECO:0007669"/>
    <property type="project" value="InterPro"/>
</dbReference>
<dbReference type="GO" id="GO:0006526">
    <property type="term" value="P:L-arginine biosynthetic process"/>
    <property type="evidence" value="ECO:0007669"/>
    <property type="project" value="UniProtKB-UniRule"/>
</dbReference>
<dbReference type="CDD" id="cd01359">
    <property type="entry name" value="Argininosuccinate_lyase"/>
    <property type="match status" value="1"/>
</dbReference>
<dbReference type="FunFam" id="1.10.40.30:FF:000001">
    <property type="entry name" value="Argininosuccinate lyase"/>
    <property type="match status" value="1"/>
</dbReference>
<dbReference type="FunFam" id="1.20.200.10:FF:000015">
    <property type="entry name" value="argininosuccinate lyase isoform X2"/>
    <property type="match status" value="1"/>
</dbReference>
<dbReference type="Gene3D" id="1.10.40.30">
    <property type="entry name" value="Fumarase/aspartase (C-terminal domain)"/>
    <property type="match status" value="1"/>
</dbReference>
<dbReference type="Gene3D" id="1.20.200.10">
    <property type="entry name" value="Fumarase/aspartase (Central domain)"/>
    <property type="match status" value="1"/>
</dbReference>
<dbReference type="Gene3D" id="1.10.275.10">
    <property type="entry name" value="Fumarase/aspartase (N-terminal domain)"/>
    <property type="match status" value="1"/>
</dbReference>
<dbReference type="HAMAP" id="MF_00006">
    <property type="entry name" value="Arg_succ_lyase"/>
    <property type="match status" value="1"/>
</dbReference>
<dbReference type="InterPro" id="IPR029419">
    <property type="entry name" value="Arg_succ_lyase_C"/>
</dbReference>
<dbReference type="InterPro" id="IPR009049">
    <property type="entry name" value="Argininosuccinate_lyase"/>
</dbReference>
<dbReference type="InterPro" id="IPR024083">
    <property type="entry name" value="Fumarase/histidase_N"/>
</dbReference>
<dbReference type="InterPro" id="IPR020557">
    <property type="entry name" value="Fumarate_lyase_CS"/>
</dbReference>
<dbReference type="InterPro" id="IPR000362">
    <property type="entry name" value="Fumarate_lyase_fam"/>
</dbReference>
<dbReference type="InterPro" id="IPR022761">
    <property type="entry name" value="Fumarate_lyase_N"/>
</dbReference>
<dbReference type="InterPro" id="IPR008948">
    <property type="entry name" value="L-Aspartase-like"/>
</dbReference>
<dbReference type="NCBIfam" id="TIGR00838">
    <property type="entry name" value="argH"/>
    <property type="match status" value="1"/>
</dbReference>
<dbReference type="PANTHER" id="PTHR43814">
    <property type="entry name" value="ARGININOSUCCINATE LYASE"/>
    <property type="match status" value="1"/>
</dbReference>
<dbReference type="PANTHER" id="PTHR43814:SF1">
    <property type="entry name" value="ARGININOSUCCINATE LYASE"/>
    <property type="match status" value="1"/>
</dbReference>
<dbReference type="Pfam" id="PF14698">
    <property type="entry name" value="ASL_C2"/>
    <property type="match status" value="1"/>
</dbReference>
<dbReference type="Pfam" id="PF00206">
    <property type="entry name" value="Lyase_1"/>
    <property type="match status" value="1"/>
</dbReference>
<dbReference type="PRINTS" id="PR00145">
    <property type="entry name" value="ARGSUCLYASE"/>
</dbReference>
<dbReference type="PRINTS" id="PR00149">
    <property type="entry name" value="FUMRATELYASE"/>
</dbReference>
<dbReference type="SUPFAM" id="SSF48557">
    <property type="entry name" value="L-aspartase-like"/>
    <property type="match status" value="1"/>
</dbReference>
<dbReference type="PROSITE" id="PS00163">
    <property type="entry name" value="FUMARATE_LYASES"/>
    <property type="match status" value="1"/>
</dbReference>
<gene>
    <name evidence="1" type="primary">argH</name>
    <name type="ordered locus">BL1057</name>
</gene>
<accession>Q8G5F3</accession>
<proteinExistence type="inferred from homology"/>
<comment type="catalytic activity">
    <reaction evidence="1">
        <text>2-(N(omega)-L-arginino)succinate = fumarate + L-arginine</text>
        <dbReference type="Rhea" id="RHEA:24020"/>
        <dbReference type="ChEBI" id="CHEBI:29806"/>
        <dbReference type="ChEBI" id="CHEBI:32682"/>
        <dbReference type="ChEBI" id="CHEBI:57472"/>
        <dbReference type="EC" id="4.3.2.1"/>
    </reaction>
</comment>
<comment type="pathway">
    <text evidence="1">Amino-acid biosynthesis; L-arginine biosynthesis; L-arginine from L-ornithine and carbamoyl phosphate: step 3/3.</text>
</comment>
<comment type="subcellular location">
    <subcellularLocation>
        <location evidence="1">Cytoplasm</location>
    </subcellularLocation>
</comment>
<comment type="similarity">
    <text evidence="1">Belongs to the lyase 1 family. Argininosuccinate lyase subfamily.</text>
</comment>
<name>ARLY_BIFLO</name>
<reference key="1">
    <citation type="journal article" date="2002" name="Proc. Natl. Acad. Sci. U.S.A.">
        <title>The genome sequence of Bifidobacterium longum reflects its adaptation to the human gastrointestinal tract.</title>
        <authorList>
            <person name="Schell M.A."/>
            <person name="Karmirantzou M."/>
            <person name="Snel B."/>
            <person name="Vilanova D."/>
            <person name="Berger B."/>
            <person name="Pessi G."/>
            <person name="Zwahlen M.-C."/>
            <person name="Desiere F."/>
            <person name="Bork P."/>
            <person name="Delley M."/>
            <person name="Pridmore R.D."/>
            <person name="Arigoni F."/>
        </authorList>
    </citation>
    <scope>NUCLEOTIDE SEQUENCE [LARGE SCALE GENOMIC DNA]</scope>
    <source>
        <strain>NCC 2705</strain>
    </source>
</reference>
<protein>
    <recommendedName>
        <fullName evidence="1">Argininosuccinate lyase</fullName>
        <shortName evidence="1">ASAL</shortName>
        <ecNumber evidence="1">4.3.2.1</ecNumber>
    </recommendedName>
    <alternativeName>
        <fullName evidence="1">Arginosuccinase</fullName>
    </alternativeName>
</protein>
<keyword id="KW-0028">Amino-acid biosynthesis</keyword>
<keyword id="KW-0055">Arginine biosynthesis</keyword>
<keyword id="KW-0963">Cytoplasm</keyword>
<keyword id="KW-0456">Lyase</keyword>
<keyword id="KW-1185">Reference proteome</keyword>